<evidence type="ECO:0000255" key="1">
    <source>
        <dbReference type="HAMAP-Rule" id="MF_01390"/>
    </source>
</evidence>
<name>MATK_GOSTU</name>
<reference key="1">
    <citation type="journal article" date="2003" name="Evolution">
        <title>Cryptic repeated genomic recombination during speciation in Gossypium gossypioides.</title>
        <authorList>
            <person name="Cronn R."/>
            <person name="Small R.L."/>
            <person name="Haselkorn T."/>
            <person name="Wendel J.F."/>
        </authorList>
    </citation>
    <scope>NUCLEOTIDE SEQUENCE [GENOMIC DNA]</scope>
</reference>
<keyword id="KW-0150">Chloroplast</keyword>
<keyword id="KW-0507">mRNA processing</keyword>
<keyword id="KW-0934">Plastid</keyword>
<keyword id="KW-0694">RNA-binding</keyword>
<keyword id="KW-0819">tRNA processing</keyword>
<sequence length="504" mass="59421">MEEFQVYLELNRSRRHDFLYPLIFREYIYALAHEHGLNKSMIFFENQGYGNKFSSPIVKRLILRMDQQNRLISSANDSNQNPVFGHNNNLYSQMIAAGFAVIVEIPFSLRLISYSQGAEAAKSHNFQSIHSIFPFLEDKFSHLNYVLEALIPHPIHLEILVQALRYWVKDACSLHLLRFSLYEYCNLKSFITPKKSISIFNPRLFLFLYNSHTCEYESIFLFLRNQSSHLRSTSSGVFLERIFFYGKIKYLGEVFYNDFQNNLWLFKDPFIHFIRYQGKSILASKDTSLLINKWKYYFVDLWQYYFYLWSQSGRVRINQLSKYSLDFLGYLSSVRLNPSVVRSQMLENSFLIDNAVKTLDTRIPIISLIGSLSKAKFCNTLGHPISKPTWADSPDSDIIDRFVRISRNLSHYHSGSSKKKSLYRIKYILRFSCVKTLARKHKSTVRAFLKKLGSEFLEEFFTETEEEHVFSLIFPRGFFALRKVYRGRIWYLDIICINALVNHS</sequence>
<geneLocation type="chloroplast"/>
<feature type="chain" id="PRO_0000143408" description="Maturase K">
    <location>
        <begin position="1"/>
        <end position="504"/>
    </location>
</feature>
<gene>
    <name evidence="1" type="primary">matK</name>
</gene>
<dbReference type="EMBL" id="AF520731">
    <property type="protein sequence ID" value="AAM77359.1"/>
    <property type="molecule type" value="Genomic_DNA"/>
</dbReference>
<dbReference type="GO" id="GO:0009507">
    <property type="term" value="C:chloroplast"/>
    <property type="evidence" value="ECO:0007669"/>
    <property type="project" value="UniProtKB-SubCell"/>
</dbReference>
<dbReference type="GO" id="GO:0003723">
    <property type="term" value="F:RNA binding"/>
    <property type="evidence" value="ECO:0007669"/>
    <property type="project" value="UniProtKB-KW"/>
</dbReference>
<dbReference type="GO" id="GO:0006397">
    <property type="term" value="P:mRNA processing"/>
    <property type="evidence" value="ECO:0007669"/>
    <property type="project" value="UniProtKB-KW"/>
</dbReference>
<dbReference type="GO" id="GO:0008380">
    <property type="term" value="P:RNA splicing"/>
    <property type="evidence" value="ECO:0007669"/>
    <property type="project" value="UniProtKB-UniRule"/>
</dbReference>
<dbReference type="GO" id="GO:0008033">
    <property type="term" value="P:tRNA processing"/>
    <property type="evidence" value="ECO:0007669"/>
    <property type="project" value="UniProtKB-KW"/>
</dbReference>
<dbReference type="HAMAP" id="MF_01390">
    <property type="entry name" value="MatK"/>
    <property type="match status" value="1"/>
</dbReference>
<dbReference type="InterPro" id="IPR024937">
    <property type="entry name" value="Domain_X"/>
</dbReference>
<dbReference type="InterPro" id="IPR002866">
    <property type="entry name" value="Maturase_MatK"/>
</dbReference>
<dbReference type="InterPro" id="IPR024942">
    <property type="entry name" value="Maturase_MatK_N"/>
</dbReference>
<dbReference type="PANTHER" id="PTHR34811">
    <property type="entry name" value="MATURASE K"/>
    <property type="match status" value="1"/>
</dbReference>
<dbReference type="PANTHER" id="PTHR34811:SF1">
    <property type="entry name" value="MATURASE K"/>
    <property type="match status" value="1"/>
</dbReference>
<dbReference type="Pfam" id="PF01348">
    <property type="entry name" value="Intron_maturas2"/>
    <property type="match status" value="1"/>
</dbReference>
<dbReference type="Pfam" id="PF01824">
    <property type="entry name" value="MatK_N"/>
    <property type="match status" value="1"/>
</dbReference>
<organism>
    <name type="scientific">Gossypium turneri</name>
    <name type="common">Cotton</name>
    <dbReference type="NCBI Taxonomy" id="34284"/>
    <lineage>
        <taxon>Eukaryota</taxon>
        <taxon>Viridiplantae</taxon>
        <taxon>Streptophyta</taxon>
        <taxon>Embryophyta</taxon>
        <taxon>Tracheophyta</taxon>
        <taxon>Spermatophyta</taxon>
        <taxon>Magnoliopsida</taxon>
        <taxon>eudicotyledons</taxon>
        <taxon>Gunneridae</taxon>
        <taxon>Pentapetalae</taxon>
        <taxon>rosids</taxon>
        <taxon>malvids</taxon>
        <taxon>Malvales</taxon>
        <taxon>Malvaceae</taxon>
        <taxon>Malvoideae</taxon>
        <taxon>Gossypium</taxon>
    </lineage>
</organism>
<comment type="function">
    <text evidence="1">Usually encoded in the trnK tRNA gene intron. Probably assists in splicing its own and other chloroplast group II introns.</text>
</comment>
<comment type="subcellular location">
    <subcellularLocation>
        <location>Plastid</location>
        <location>Chloroplast</location>
    </subcellularLocation>
</comment>
<comment type="similarity">
    <text evidence="1">Belongs to the intron maturase 2 family. MatK subfamily.</text>
</comment>
<proteinExistence type="inferred from homology"/>
<accession>Q8MCV5</accession>
<protein>
    <recommendedName>
        <fullName evidence="1">Maturase K</fullName>
    </recommendedName>
    <alternativeName>
        <fullName evidence="1">Intron maturase</fullName>
    </alternativeName>
</protein>